<keyword id="KW-1185">Reference proteome</keyword>
<keyword id="KW-0677">Repeat</keyword>
<name>YDHE_SCHPO</name>
<proteinExistence type="predicted"/>
<sequence>MTEQSSKSHPSFMSTEYSLPVFSSQYSDIENKDVLKSNSWDPYAANAPIALSEIPSSSKSGKTNGSKAAVESGLASGAFGNRTGNMNRNTSMSGYTFGSSNFVPYNLLSNTPSFTTSHSSSTTFVPPATMGGGLNNLSSPSSSLYLPGSASYQRSNSKNSSASILQMNTTLDDIPILLRRPGLSSYTPGPSTSRRSISSSSNLGGNPGLIANNPSASKNFAFTSGSSSTNNSTTSSSSMANGLQSISKHSAAFPLLSNATSFFGENLTPSLAASTASTGSTDSSGSNIANTLIAPTPTISPPSANTVGNPSPADTPGFNVPSLISDDPSVSSSLSSSVASLSLQNSNILSFCKDQHGCRYLQRLLEKKNQSHIDAVFAETHPYLAVLMVDAFGNYLCQKLFEHASEAQRSTFIQIIAPKLVPISFNMHGTRALQKIIDLVSSPDQISCIVNALRPNVVLLTKDLNGNHVIQKCLNKFSQEDCQFIFDAICEDPLDVSTHRHGCCVVQRCFDHASPAQIEQLVEHIVPHALTLVQDAFGNYVLQYVLELNNPNHTEAIISYFLYKVRALSTQKFSSNVMEKCIFFAPAAIKEKLISELMDEKHLPKLLRDSFANYVIQTALDNASVKQRAELVERIKPLIPSIKNTPCGRRILSKLERRHPSSKEKPIVYSNSERVNTSSSA</sequence>
<feature type="chain" id="PRO_0000075938" description="Pumilio domain-containing protein C6G9.14">
    <location>
        <begin position="1"/>
        <end position="681"/>
    </location>
</feature>
<feature type="domain" description="PUM-HD" evidence="1">
    <location>
        <begin position="319"/>
        <end position="659"/>
    </location>
</feature>
<feature type="repeat" description="Pumilio 1">
    <location>
        <begin position="342"/>
        <end position="378"/>
    </location>
</feature>
<feature type="repeat" description="Pumilio 2">
    <location>
        <begin position="379"/>
        <end position="414"/>
    </location>
</feature>
<feature type="repeat" description="Pumilio 3">
    <location>
        <begin position="415"/>
        <end position="451"/>
    </location>
</feature>
<feature type="repeat" description="Pumilio 4">
    <location>
        <begin position="452"/>
        <end position="487"/>
    </location>
</feature>
<feature type="repeat" description="Pumilio 5">
    <location>
        <begin position="488"/>
        <end position="523"/>
    </location>
</feature>
<feature type="repeat" description="Pumilio 6">
    <location>
        <begin position="524"/>
        <end position="559"/>
    </location>
</feature>
<feature type="repeat" description="Pumilio 7">
    <location>
        <begin position="560"/>
        <end position="595"/>
    </location>
</feature>
<feature type="repeat" description="Pumilio 8">
    <location>
        <begin position="596"/>
        <end position="633"/>
    </location>
</feature>
<feature type="region of interest" description="Disordered" evidence="2">
    <location>
        <begin position="180"/>
        <end position="210"/>
    </location>
</feature>
<feature type="region of interest" description="Disordered" evidence="2">
    <location>
        <begin position="273"/>
        <end position="322"/>
    </location>
</feature>
<feature type="region of interest" description="Disordered" evidence="2">
    <location>
        <begin position="656"/>
        <end position="681"/>
    </location>
</feature>
<feature type="compositionally biased region" description="Low complexity" evidence="2">
    <location>
        <begin position="187"/>
        <end position="210"/>
    </location>
</feature>
<feature type="compositionally biased region" description="Low complexity" evidence="2">
    <location>
        <begin position="273"/>
        <end position="286"/>
    </location>
</feature>
<feature type="compositionally biased region" description="Basic and acidic residues" evidence="2">
    <location>
        <begin position="656"/>
        <end position="666"/>
    </location>
</feature>
<feature type="compositionally biased region" description="Polar residues" evidence="2">
    <location>
        <begin position="669"/>
        <end position="681"/>
    </location>
</feature>
<organism>
    <name type="scientific">Schizosaccharomyces pombe (strain 972 / ATCC 24843)</name>
    <name type="common">Fission yeast</name>
    <dbReference type="NCBI Taxonomy" id="284812"/>
    <lineage>
        <taxon>Eukaryota</taxon>
        <taxon>Fungi</taxon>
        <taxon>Dikarya</taxon>
        <taxon>Ascomycota</taxon>
        <taxon>Taphrinomycotina</taxon>
        <taxon>Schizosaccharomycetes</taxon>
        <taxon>Schizosaccharomycetales</taxon>
        <taxon>Schizosaccharomycetaceae</taxon>
        <taxon>Schizosaccharomyces</taxon>
    </lineage>
</organism>
<gene>
    <name type="ORF">SPAC6G9.14</name>
</gene>
<dbReference type="EMBL" id="CU329670">
    <property type="protein sequence ID" value="CAB03616.1"/>
    <property type="molecule type" value="Genomic_DNA"/>
</dbReference>
<dbReference type="PIR" id="T39076">
    <property type="entry name" value="T39076"/>
</dbReference>
<dbReference type="SMR" id="Q92359"/>
<dbReference type="BioGRID" id="278535">
    <property type="interactions" value="42"/>
</dbReference>
<dbReference type="FunCoup" id="Q92359">
    <property type="interactions" value="364"/>
</dbReference>
<dbReference type="STRING" id="284812.Q92359"/>
<dbReference type="iPTMnet" id="Q92359"/>
<dbReference type="PaxDb" id="4896-SPAC6G9.14.1"/>
<dbReference type="EnsemblFungi" id="SPAC6G9.14.1">
    <property type="protein sequence ID" value="SPAC6G9.14.1:pep"/>
    <property type="gene ID" value="SPAC6G9.14"/>
</dbReference>
<dbReference type="KEGG" id="spo:2542056"/>
<dbReference type="PomBase" id="SPAC6G9.14"/>
<dbReference type="VEuPathDB" id="FungiDB:SPAC6G9.14"/>
<dbReference type="eggNOG" id="KOG2049">
    <property type="taxonomic scope" value="Eukaryota"/>
</dbReference>
<dbReference type="HOGENOM" id="CLU_403933_0_0_1"/>
<dbReference type="InParanoid" id="Q92359"/>
<dbReference type="OMA" id="AKTFDQK"/>
<dbReference type="PRO" id="PR:Q92359"/>
<dbReference type="Proteomes" id="UP000002485">
    <property type="component" value="Chromosome I"/>
</dbReference>
<dbReference type="GO" id="GO:0005737">
    <property type="term" value="C:cytoplasm"/>
    <property type="evidence" value="ECO:0000318"/>
    <property type="project" value="GO_Central"/>
</dbReference>
<dbReference type="GO" id="GO:0010494">
    <property type="term" value="C:cytoplasmic stress granule"/>
    <property type="evidence" value="ECO:0000269"/>
    <property type="project" value="PomBase"/>
</dbReference>
<dbReference type="GO" id="GO:0005829">
    <property type="term" value="C:cytosol"/>
    <property type="evidence" value="ECO:0007005"/>
    <property type="project" value="PomBase"/>
</dbReference>
<dbReference type="GO" id="GO:0000932">
    <property type="term" value="C:P-body"/>
    <property type="evidence" value="ECO:0000269"/>
    <property type="project" value="PomBase"/>
</dbReference>
<dbReference type="GO" id="GO:0003729">
    <property type="term" value="F:mRNA binding"/>
    <property type="evidence" value="ECO:0000318"/>
    <property type="project" value="GO_Central"/>
</dbReference>
<dbReference type="GO" id="GO:0000288">
    <property type="term" value="P:nuclear-transcribed mRNA catabolic process, deadenylation-dependent decay"/>
    <property type="evidence" value="ECO:0000266"/>
    <property type="project" value="PomBase"/>
</dbReference>
<dbReference type="GO" id="GO:0010608">
    <property type="term" value="P:post-transcriptional regulation of gene expression"/>
    <property type="evidence" value="ECO:0000318"/>
    <property type="project" value="GO_Central"/>
</dbReference>
<dbReference type="CDD" id="cd07920">
    <property type="entry name" value="Pumilio"/>
    <property type="match status" value="1"/>
</dbReference>
<dbReference type="FunFam" id="1.25.10.10:FF:000237">
    <property type="entry name" value="Pumilio homolog 9"/>
    <property type="match status" value="1"/>
</dbReference>
<dbReference type="Gene3D" id="1.25.10.10">
    <property type="entry name" value="Leucine-rich Repeat Variant"/>
    <property type="match status" value="1"/>
</dbReference>
<dbReference type="InterPro" id="IPR011989">
    <property type="entry name" value="ARM-like"/>
</dbReference>
<dbReference type="InterPro" id="IPR016024">
    <property type="entry name" value="ARM-type_fold"/>
</dbReference>
<dbReference type="InterPro" id="IPR033133">
    <property type="entry name" value="PUM-HD"/>
</dbReference>
<dbReference type="InterPro" id="IPR033712">
    <property type="entry name" value="Pumilio_RNA-bd"/>
</dbReference>
<dbReference type="InterPro" id="IPR001313">
    <property type="entry name" value="Pumilio_RNA-bd_rpt"/>
</dbReference>
<dbReference type="PANTHER" id="PTHR12537:SF13">
    <property type="entry name" value="PUMILIO HOMOLOGY DOMAIN FAMILY MEMBER 4"/>
    <property type="match status" value="1"/>
</dbReference>
<dbReference type="PANTHER" id="PTHR12537">
    <property type="entry name" value="RNA BINDING PROTEIN PUMILIO-RELATED"/>
    <property type="match status" value="1"/>
</dbReference>
<dbReference type="Pfam" id="PF00806">
    <property type="entry name" value="PUF"/>
    <property type="match status" value="6"/>
</dbReference>
<dbReference type="Pfam" id="PF22493">
    <property type="entry name" value="PUF_NOP9"/>
    <property type="match status" value="1"/>
</dbReference>
<dbReference type="SMART" id="SM00025">
    <property type="entry name" value="Pumilio"/>
    <property type="match status" value="8"/>
</dbReference>
<dbReference type="SUPFAM" id="SSF48371">
    <property type="entry name" value="ARM repeat"/>
    <property type="match status" value="1"/>
</dbReference>
<dbReference type="PROSITE" id="PS50302">
    <property type="entry name" value="PUM"/>
    <property type="match status" value="8"/>
</dbReference>
<dbReference type="PROSITE" id="PS50303">
    <property type="entry name" value="PUM_HD"/>
    <property type="match status" value="1"/>
</dbReference>
<protein>
    <recommendedName>
        <fullName>Pumilio domain-containing protein C6G9.14</fullName>
    </recommendedName>
</protein>
<reference key="1">
    <citation type="journal article" date="2002" name="Nature">
        <title>The genome sequence of Schizosaccharomyces pombe.</title>
        <authorList>
            <person name="Wood V."/>
            <person name="Gwilliam R."/>
            <person name="Rajandream M.A."/>
            <person name="Lyne M.H."/>
            <person name="Lyne R."/>
            <person name="Stewart A."/>
            <person name="Sgouros J.G."/>
            <person name="Peat N."/>
            <person name="Hayles J."/>
            <person name="Baker S.G."/>
            <person name="Basham D."/>
            <person name="Bowman S."/>
            <person name="Brooks K."/>
            <person name="Brown D."/>
            <person name="Brown S."/>
            <person name="Chillingworth T."/>
            <person name="Churcher C.M."/>
            <person name="Collins M."/>
            <person name="Connor R."/>
            <person name="Cronin A."/>
            <person name="Davis P."/>
            <person name="Feltwell T."/>
            <person name="Fraser A."/>
            <person name="Gentles S."/>
            <person name="Goble A."/>
            <person name="Hamlin N."/>
            <person name="Harris D.E."/>
            <person name="Hidalgo J."/>
            <person name="Hodgson G."/>
            <person name="Holroyd S."/>
            <person name="Hornsby T."/>
            <person name="Howarth S."/>
            <person name="Huckle E.J."/>
            <person name="Hunt S."/>
            <person name="Jagels K."/>
            <person name="James K.D."/>
            <person name="Jones L."/>
            <person name="Jones M."/>
            <person name="Leather S."/>
            <person name="McDonald S."/>
            <person name="McLean J."/>
            <person name="Mooney P."/>
            <person name="Moule S."/>
            <person name="Mungall K.L."/>
            <person name="Murphy L.D."/>
            <person name="Niblett D."/>
            <person name="Odell C."/>
            <person name="Oliver K."/>
            <person name="O'Neil S."/>
            <person name="Pearson D."/>
            <person name="Quail M.A."/>
            <person name="Rabbinowitsch E."/>
            <person name="Rutherford K.M."/>
            <person name="Rutter S."/>
            <person name="Saunders D."/>
            <person name="Seeger K."/>
            <person name="Sharp S."/>
            <person name="Skelton J."/>
            <person name="Simmonds M.N."/>
            <person name="Squares R."/>
            <person name="Squares S."/>
            <person name="Stevens K."/>
            <person name="Taylor K."/>
            <person name="Taylor R.G."/>
            <person name="Tivey A."/>
            <person name="Walsh S.V."/>
            <person name="Warren T."/>
            <person name="Whitehead S."/>
            <person name="Woodward J.R."/>
            <person name="Volckaert G."/>
            <person name="Aert R."/>
            <person name="Robben J."/>
            <person name="Grymonprez B."/>
            <person name="Weltjens I."/>
            <person name="Vanstreels E."/>
            <person name="Rieger M."/>
            <person name="Schaefer M."/>
            <person name="Mueller-Auer S."/>
            <person name="Gabel C."/>
            <person name="Fuchs M."/>
            <person name="Duesterhoeft A."/>
            <person name="Fritzc C."/>
            <person name="Holzer E."/>
            <person name="Moestl D."/>
            <person name="Hilbert H."/>
            <person name="Borzym K."/>
            <person name="Langer I."/>
            <person name="Beck A."/>
            <person name="Lehrach H."/>
            <person name="Reinhardt R."/>
            <person name="Pohl T.M."/>
            <person name="Eger P."/>
            <person name="Zimmermann W."/>
            <person name="Wedler H."/>
            <person name="Wambutt R."/>
            <person name="Purnelle B."/>
            <person name="Goffeau A."/>
            <person name="Cadieu E."/>
            <person name="Dreano S."/>
            <person name="Gloux S."/>
            <person name="Lelaure V."/>
            <person name="Mottier S."/>
            <person name="Galibert F."/>
            <person name="Aves S.J."/>
            <person name="Xiang Z."/>
            <person name="Hunt C."/>
            <person name="Moore K."/>
            <person name="Hurst S.M."/>
            <person name="Lucas M."/>
            <person name="Rochet M."/>
            <person name="Gaillardin C."/>
            <person name="Tallada V.A."/>
            <person name="Garzon A."/>
            <person name="Thode G."/>
            <person name="Daga R.R."/>
            <person name="Cruzado L."/>
            <person name="Jimenez J."/>
            <person name="Sanchez M."/>
            <person name="del Rey F."/>
            <person name="Benito J."/>
            <person name="Dominguez A."/>
            <person name="Revuelta J.L."/>
            <person name="Moreno S."/>
            <person name="Armstrong J."/>
            <person name="Forsburg S.L."/>
            <person name="Cerutti L."/>
            <person name="Lowe T."/>
            <person name="McCombie W.R."/>
            <person name="Paulsen I."/>
            <person name="Potashkin J."/>
            <person name="Shpakovski G.V."/>
            <person name="Ussery D."/>
            <person name="Barrell B.G."/>
            <person name="Nurse P."/>
        </authorList>
    </citation>
    <scope>NUCLEOTIDE SEQUENCE [LARGE SCALE GENOMIC DNA]</scope>
    <source>
        <strain>972 / ATCC 24843</strain>
    </source>
</reference>
<accession>Q92359</accession>
<evidence type="ECO:0000255" key="1">
    <source>
        <dbReference type="PROSITE-ProRule" id="PRU00318"/>
    </source>
</evidence>
<evidence type="ECO:0000256" key="2">
    <source>
        <dbReference type="SAM" id="MobiDB-lite"/>
    </source>
</evidence>